<comment type="function">
    <text evidence="1">Involved in the gluconeogenesis. Catalyzes the conversion of oxaloacetate (OAA) to phosphoenolpyruvate (PEP) through direct phosphoryl transfer between the nucleoside triphosphate and OAA.</text>
</comment>
<comment type="catalytic activity">
    <reaction evidence="1">
        <text>oxaloacetate + ATP = phosphoenolpyruvate + ADP + CO2</text>
        <dbReference type="Rhea" id="RHEA:18617"/>
        <dbReference type="ChEBI" id="CHEBI:16452"/>
        <dbReference type="ChEBI" id="CHEBI:16526"/>
        <dbReference type="ChEBI" id="CHEBI:30616"/>
        <dbReference type="ChEBI" id="CHEBI:58702"/>
        <dbReference type="ChEBI" id="CHEBI:456216"/>
        <dbReference type="EC" id="4.1.1.49"/>
    </reaction>
</comment>
<comment type="cofactor">
    <cofactor evidence="1">
        <name>Mn(2+)</name>
        <dbReference type="ChEBI" id="CHEBI:29035"/>
    </cofactor>
    <text evidence="1">Binds 1 Mn(2+) ion per subunit.</text>
</comment>
<comment type="pathway">
    <text evidence="1">Carbohydrate biosynthesis; gluconeogenesis.</text>
</comment>
<comment type="subunit">
    <text evidence="1">Monomer.</text>
</comment>
<comment type="subcellular location">
    <subcellularLocation>
        <location evidence="1">Cytoplasm</location>
    </subcellularLocation>
</comment>
<comment type="similarity">
    <text evidence="1">Belongs to the phosphoenolpyruvate carboxykinase (ATP) family.</text>
</comment>
<accession>Q48BY7</accession>
<evidence type="ECO:0000255" key="1">
    <source>
        <dbReference type="HAMAP-Rule" id="MF_00453"/>
    </source>
</evidence>
<name>PCKA_PSE14</name>
<organism>
    <name type="scientific">Pseudomonas savastanoi pv. phaseolicola (strain 1448A / Race 6)</name>
    <name type="common">Pseudomonas syringae pv. phaseolicola (strain 1448A / Race 6)</name>
    <dbReference type="NCBI Taxonomy" id="264730"/>
    <lineage>
        <taxon>Bacteria</taxon>
        <taxon>Pseudomonadati</taxon>
        <taxon>Pseudomonadota</taxon>
        <taxon>Gammaproteobacteria</taxon>
        <taxon>Pseudomonadales</taxon>
        <taxon>Pseudomonadaceae</taxon>
        <taxon>Pseudomonas</taxon>
    </lineage>
</organism>
<proteinExistence type="inferred from homology"/>
<protein>
    <recommendedName>
        <fullName evidence="1">Phosphoenolpyruvate carboxykinase (ATP)</fullName>
        <shortName evidence="1">PCK</shortName>
        <shortName evidence="1">PEP carboxykinase</shortName>
        <shortName evidence="1">PEPCK</shortName>
        <ecNumber evidence="1">4.1.1.49</ecNumber>
    </recommendedName>
</protein>
<dbReference type="EC" id="4.1.1.49" evidence="1"/>
<dbReference type="EMBL" id="CP000058">
    <property type="protein sequence ID" value="AAZ35238.1"/>
    <property type="molecule type" value="Genomic_DNA"/>
</dbReference>
<dbReference type="RefSeq" id="WP_011169856.1">
    <property type="nucleotide sequence ID" value="NC_005773.3"/>
</dbReference>
<dbReference type="SMR" id="Q48BY7"/>
<dbReference type="KEGG" id="psp:PSPPH_5022"/>
<dbReference type="eggNOG" id="COG1866">
    <property type="taxonomic scope" value="Bacteria"/>
</dbReference>
<dbReference type="HOGENOM" id="CLU_018247_0_1_6"/>
<dbReference type="UniPathway" id="UPA00138"/>
<dbReference type="Proteomes" id="UP000000551">
    <property type="component" value="Chromosome"/>
</dbReference>
<dbReference type="GO" id="GO:0005829">
    <property type="term" value="C:cytosol"/>
    <property type="evidence" value="ECO:0007669"/>
    <property type="project" value="TreeGrafter"/>
</dbReference>
<dbReference type="GO" id="GO:0005524">
    <property type="term" value="F:ATP binding"/>
    <property type="evidence" value="ECO:0007669"/>
    <property type="project" value="UniProtKB-UniRule"/>
</dbReference>
<dbReference type="GO" id="GO:0046872">
    <property type="term" value="F:metal ion binding"/>
    <property type="evidence" value="ECO:0007669"/>
    <property type="project" value="UniProtKB-KW"/>
</dbReference>
<dbReference type="GO" id="GO:0004612">
    <property type="term" value="F:phosphoenolpyruvate carboxykinase (ATP) activity"/>
    <property type="evidence" value="ECO:0007669"/>
    <property type="project" value="UniProtKB-UniRule"/>
</dbReference>
<dbReference type="GO" id="GO:0006094">
    <property type="term" value="P:gluconeogenesis"/>
    <property type="evidence" value="ECO:0007669"/>
    <property type="project" value="UniProtKB-UniRule"/>
</dbReference>
<dbReference type="Gene3D" id="3.90.228.20">
    <property type="match status" value="1"/>
</dbReference>
<dbReference type="Gene3D" id="3.40.449.10">
    <property type="entry name" value="Phosphoenolpyruvate Carboxykinase, domain 1"/>
    <property type="match status" value="1"/>
</dbReference>
<dbReference type="Gene3D" id="2.170.8.10">
    <property type="entry name" value="Phosphoenolpyruvate Carboxykinase, domain 2"/>
    <property type="match status" value="1"/>
</dbReference>
<dbReference type="HAMAP" id="MF_00453">
    <property type="entry name" value="PEPCK_ATP"/>
    <property type="match status" value="1"/>
</dbReference>
<dbReference type="InterPro" id="IPR001272">
    <property type="entry name" value="PEP_carboxykinase_ATP"/>
</dbReference>
<dbReference type="InterPro" id="IPR013035">
    <property type="entry name" value="PEP_carboxykinase_C"/>
</dbReference>
<dbReference type="InterPro" id="IPR008210">
    <property type="entry name" value="PEP_carboxykinase_N"/>
</dbReference>
<dbReference type="InterPro" id="IPR015994">
    <property type="entry name" value="PEPCK_ATP_CS"/>
</dbReference>
<dbReference type="NCBIfam" id="TIGR00224">
    <property type="entry name" value="pckA"/>
    <property type="match status" value="1"/>
</dbReference>
<dbReference type="NCBIfam" id="NF006820">
    <property type="entry name" value="PRK09344.1-2"/>
    <property type="match status" value="1"/>
</dbReference>
<dbReference type="NCBIfam" id="NF006821">
    <property type="entry name" value="PRK09344.1-3"/>
    <property type="match status" value="1"/>
</dbReference>
<dbReference type="NCBIfam" id="NF006823">
    <property type="entry name" value="PRK09344.1-5"/>
    <property type="match status" value="1"/>
</dbReference>
<dbReference type="PANTHER" id="PTHR30031:SF0">
    <property type="entry name" value="PHOSPHOENOLPYRUVATE CARBOXYKINASE (ATP)"/>
    <property type="match status" value="1"/>
</dbReference>
<dbReference type="PANTHER" id="PTHR30031">
    <property type="entry name" value="PHOSPHOENOLPYRUVATE CARBOXYKINASE ATP"/>
    <property type="match status" value="1"/>
</dbReference>
<dbReference type="Pfam" id="PF01293">
    <property type="entry name" value="PEPCK_ATP"/>
    <property type="match status" value="1"/>
</dbReference>
<dbReference type="PIRSF" id="PIRSF006294">
    <property type="entry name" value="PEP_crbxkin"/>
    <property type="match status" value="1"/>
</dbReference>
<dbReference type="SUPFAM" id="SSF68923">
    <property type="entry name" value="PEP carboxykinase N-terminal domain"/>
    <property type="match status" value="1"/>
</dbReference>
<dbReference type="SUPFAM" id="SSF53795">
    <property type="entry name" value="PEP carboxykinase-like"/>
    <property type="match status" value="1"/>
</dbReference>
<dbReference type="PROSITE" id="PS00532">
    <property type="entry name" value="PEPCK_ATP"/>
    <property type="match status" value="1"/>
</dbReference>
<reference key="1">
    <citation type="journal article" date="2005" name="J. Bacteriol.">
        <title>Whole-genome sequence analysis of Pseudomonas syringae pv. phaseolicola 1448A reveals divergence among pathovars in genes involved in virulence and transposition.</title>
        <authorList>
            <person name="Joardar V."/>
            <person name="Lindeberg M."/>
            <person name="Jackson R.W."/>
            <person name="Selengut J."/>
            <person name="Dodson R."/>
            <person name="Brinkac L.M."/>
            <person name="Daugherty S.C."/>
            <person name="DeBoy R.T."/>
            <person name="Durkin A.S."/>
            <person name="Gwinn Giglio M."/>
            <person name="Madupu R."/>
            <person name="Nelson W.C."/>
            <person name="Rosovitz M.J."/>
            <person name="Sullivan S.A."/>
            <person name="Crabtree J."/>
            <person name="Creasy T."/>
            <person name="Davidsen T.M."/>
            <person name="Haft D.H."/>
            <person name="Zafar N."/>
            <person name="Zhou L."/>
            <person name="Halpin R."/>
            <person name="Holley T."/>
            <person name="Khouri H.M."/>
            <person name="Feldblyum T.V."/>
            <person name="White O."/>
            <person name="Fraser C.M."/>
            <person name="Chatterjee A.K."/>
            <person name="Cartinhour S."/>
            <person name="Schneider D."/>
            <person name="Mansfield J.W."/>
            <person name="Collmer A."/>
            <person name="Buell R."/>
        </authorList>
    </citation>
    <scope>NUCLEOTIDE SEQUENCE [LARGE SCALE GENOMIC DNA]</scope>
    <source>
        <strain>1448A / Race 6</strain>
    </source>
</reference>
<gene>
    <name evidence="1" type="primary">pckA</name>
    <name type="ordered locus">PSPPH_5022</name>
</gene>
<feature type="chain" id="PRO_0000236935" description="Phosphoenolpyruvate carboxykinase (ATP)">
    <location>
        <begin position="1"/>
        <end position="514"/>
    </location>
</feature>
<feature type="binding site" evidence="1">
    <location>
        <position position="45"/>
    </location>
    <ligand>
        <name>substrate</name>
    </ligand>
</feature>
<feature type="binding site" evidence="1">
    <location>
        <position position="179"/>
    </location>
    <ligand>
        <name>substrate</name>
    </ligand>
</feature>
<feature type="binding site" evidence="1">
    <location>
        <position position="185"/>
    </location>
    <ligand>
        <name>ATP</name>
        <dbReference type="ChEBI" id="CHEBI:30616"/>
    </ligand>
</feature>
<feature type="binding site" evidence="1">
    <location>
        <position position="185"/>
    </location>
    <ligand>
        <name>Mn(2+)</name>
        <dbReference type="ChEBI" id="CHEBI:29035"/>
    </ligand>
</feature>
<feature type="binding site" evidence="1">
    <location>
        <position position="185"/>
    </location>
    <ligand>
        <name>substrate</name>
    </ligand>
</feature>
<feature type="binding site" evidence="1">
    <location>
        <position position="204"/>
    </location>
    <ligand>
        <name>ATP</name>
        <dbReference type="ChEBI" id="CHEBI:30616"/>
    </ligand>
</feature>
<feature type="binding site" evidence="1">
    <location>
        <position position="204"/>
    </location>
    <ligand>
        <name>Mn(2+)</name>
        <dbReference type="ChEBI" id="CHEBI:29035"/>
    </ligand>
</feature>
<feature type="binding site" evidence="1">
    <location>
        <begin position="220"/>
        <end position="228"/>
    </location>
    <ligand>
        <name>ATP</name>
        <dbReference type="ChEBI" id="CHEBI:30616"/>
    </ligand>
</feature>
<feature type="binding site" evidence="1">
    <location>
        <position position="241"/>
    </location>
    <ligand>
        <name>Mn(2+)</name>
        <dbReference type="ChEBI" id="CHEBI:29035"/>
    </ligand>
</feature>
<feature type="binding site" evidence="1">
    <location>
        <position position="269"/>
    </location>
    <ligand>
        <name>ATP</name>
        <dbReference type="ChEBI" id="CHEBI:30616"/>
    </ligand>
</feature>
<feature type="binding site" evidence="1">
    <location>
        <position position="306"/>
    </location>
    <ligand>
        <name>ATP</name>
        <dbReference type="ChEBI" id="CHEBI:30616"/>
    </ligand>
</feature>
<feature type="binding site" evidence="1">
    <location>
        <position position="306"/>
    </location>
    <ligand>
        <name>substrate</name>
    </ligand>
</feature>
<feature type="binding site" evidence="1">
    <location>
        <position position="432"/>
    </location>
    <ligand>
        <name>ATP</name>
        <dbReference type="ChEBI" id="CHEBI:30616"/>
    </ligand>
</feature>
<sequence length="514" mass="55814">MTQINNAVHTDLSTDELVKEALARNEGVLSDTGALVVETGHRTGRSPVDRFIVEEPSTQDAIAWGPINRKFPAEKFDALWNRVGAYLAERERFVSHVHVGSDPAHYLPVKMTTETAWHNLFGRCLFINPEQYNPAGKDEWEIQNAPWFVCDPERDGTNSDGTVIINFAARKVLIAGMRYAGEMKKAMFSVQNFLLPASDVLPMHCAANMGEEGDVTLFFGLSGTGKTTLSADESRYLIGDDEHGWGEGVVFNIEGGCYAKCIDLSEKNEPVIWKAIQHGAVLENVVLDPVTKKADYADSSLTQNSRAAYPRELIEKRAPKNLGGEPNAVIFLTCDLTGVLPPVSILSEEQAAYHFLSGYTALVGSTEMGSGSGIKSTFSTCFGAPFFPRPAGEYAELLIKRIRGFKSKVYLVNTGWTGGGYGVGKRFNIPTTRGVVAAIQSGALIGAETEHLDTINLDVPKSVPGVDTGLLNPRNTWADKAAYDEAAKALAGLFVENFKKFDVSDAIKAAGPKL</sequence>
<keyword id="KW-0067">ATP-binding</keyword>
<keyword id="KW-0963">Cytoplasm</keyword>
<keyword id="KW-0210">Decarboxylase</keyword>
<keyword id="KW-0312">Gluconeogenesis</keyword>
<keyword id="KW-0456">Lyase</keyword>
<keyword id="KW-0464">Manganese</keyword>
<keyword id="KW-0479">Metal-binding</keyword>
<keyword id="KW-0547">Nucleotide-binding</keyword>